<comment type="function">
    <text evidence="1">FMRFamides and FMRFamide-like peptides are neuropeptides.</text>
</comment>
<comment type="subcellular location">
    <subcellularLocation>
        <location evidence="6">Secreted</location>
    </subcellularLocation>
</comment>
<comment type="similarity">
    <text evidence="2">Belongs to the FARP (FMRF amide related peptide) family.</text>
</comment>
<protein>
    <recommendedName>
        <fullName evidence="4">Extended FMRFamide-5</fullName>
        <shortName evidence="4">FMRFa-5</shortName>
    </recommendedName>
</protein>
<sequence>TDRNFLRL</sequence>
<reference evidence="5" key="1">
    <citation type="journal article" date="2012" name="Syst. Biol.">
        <title>Peptidomics-based phylogeny and biogeography of Mantophasmatodea (Hexapoda).</title>
        <authorList>
            <person name="Predel R."/>
            <person name="Neupert S."/>
            <person name="Huetteroth W."/>
            <person name="Kahnt J."/>
            <person name="Waidelich D."/>
            <person name="Roth S."/>
        </authorList>
    </citation>
    <scope>PROTEIN SEQUENCE</scope>
    <scope>AMIDATION AT LEU-8</scope>
    <source>
        <tissue evidence="3">Thoracic perisympathetic organs</tissue>
    </source>
</reference>
<evidence type="ECO:0000250" key="1">
    <source>
        <dbReference type="UniProtKB" id="P34405"/>
    </source>
</evidence>
<evidence type="ECO:0000255" key="2"/>
<evidence type="ECO:0000269" key="3">
    <source>
    </source>
</evidence>
<evidence type="ECO:0000303" key="4">
    <source>
    </source>
</evidence>
<evidence type="ECO:0000305" key="5"/>
<evidence type="ECO:0000305" key="6">
    <source>
    </source>
</evidence>
<proteinExistence type="evidence at protein level"/>
<keyword id="KW-0027">Amidation</keyword>
<keyword id="KW-0903">Direct protein sequencing</keyword>
<keyword id="KW-0527">Neuropeptide</keyword>
<keyword id="KW-0964">Secreted</keyword>
<organism>
    <name type="scientific">Austrophasma rawsonvillense</name>
    <name type="common">Gladiator</name>
    <name type="synonym">Heel-walker</name>
    <dbReference type="NCBI Taxonomy" id="253137"/>
    <lineage>
        <taxon>Eukaryota</taxon>
        <taxon>Metazoa</taxon>
        <taxon>Ecdysozoa</taxon>
        <taxon>Arthropoda</taxon>
        <taxon>Hexapoda</taxon>
        <taxon>Insecta</taxon>
        <taxon>Pterygota</taxon>
        <taxon>Neoptera</taxon>
        <taxon>Polyneoptera</taxon>
        <taxon>Mantophasmatodea</taxon>
        <taxon>Austrophasmatidae</taxon>
        <taxon>Austrophasma</taxon>
    </lineage>
</organism>
<accession>B3A0A4</accession>
<dbReference type="GO" id="GO:0005576">
    <property type="term" value="C:extracellular region"/>
    <property type="evidence" value="ECO:0007669"/>
    <property type="project" value="UniProtKB-SubCell"/>
</dbReference>
<dbReference type="GO" id="GO:0007218">
    <property type="term" value="P:neuropeptide signaling pathway"/>
    <property type="evidence" value="ECO:0007669"/>
    <property type="project" value="UniProtKB-KW"/>
</dbReference>
<feature type="peptide" id="PRO_0000421512" description="Extended FMRFamide-5" evidence="3">
    <location>
        <begin position="1"/>
        <end position="8"/>
    </location>
</feature>
<feature type="modified residue" description="Leucine amide" evidence="3">
    <location>
        <position position="8"/>
    </location>
</feature>
<feature type="unsure residue" description="L or I" evidence="3">
    <location>
        <position position="6"/>
    </location>
</feature>
<feature type="unsure residue" description="L or I" evidence="3">
    <location>
        <position position="8"/>
    </location>
</feature>
<name>FAR5_AUSRA</name>